<name>CRK18_ARATH</name>
<keyword id="KW-0025">Alternative splicing</keyword>
<keyword id="KW-0067">ATP-binding</keyword>
<keyword id="KW-0325">Glycoprotein</keyword>
<keyword id="KW-0418">Kinase</keyword>
<keyword id="KW-0472">Membrane</keyword>
<keyword id="KW-0547">Nucleotide-binding</keyword>
<keyword id="KW-0597">Phosphoprotein</keyword>
<keyword id="KW-0675">Receptor</keyword>
<keyword id="KW-1185">Reference proteome</keyword>
<keyword id="KW-0677">Repeat</keyword>
<keyword id="KW-0723">Serine/threonine-protein kinase</keyword>
<keyword id="KW-0732">Signal</keyword>
<keyword id="KW-0808">Transferase</keyword>
<keyword id="KW-0812">Transmembrane</keyword>
<keyword id="KW-1133">Transmembrane helix</keyword>
<comment type="catalytic activity">
    <reaction>
        <text>L-seryl-[protein] + ATP = O-phospho-L-seryl-[protein] + ADP + H(+)</text>
        <dbReference type="Rhea" id="RHEA:17989"/>
        <dbReference type="Rhea" id="RHEA-COMP:9863"/>
        <dbReference type="Rhea" id="RHEA-COMP:11604"/>
        <dbReference type="ChEBI" id="CHEBI:15378"/>
        <dbReference type="ChEBI" id="CHEBI:29999"/>
        <dbReference type="ChEBI" id="CHEBI:30616"/>
        <dbReference type="ChEBI" id="CHEBI:83421"/>
        <dbReference type="ChEBI" id="CHEBI:456216"/>
    </reaction>
</comment>
<comment type="catalytic activity">
    <reaction>
        <text>L-threonyl-[protein] + ATP = O-phospho-L-threonyl-[protein] + ADP + H(+)</text>
        <dbReference type="Rhea" id="RHEA:46608"/>
        <dbReference type="Rhea" id="RHEA-COMP:11060"/>
        <dbReference type="Rhea" id="RHEA-COMP:11605"/>
        <dbReference type="ChEBI" id="CHEBI:15378"/>
        <dbReference type="ChEBI" id="CHEBI:30013"/>
        <dbReference type="ChEBI" id="CHEBI:30616"/>
        <dbReference type="ChEBI" id="CHEBI:61977"/>
        <dbReference type="ChEBI" id="CHEBI:456216"/>
    </reaction>
</comment>
<comment type="subcellular location">
    <subcellularLocation>
        <location evidence="6">Membrane</location>
        <topology evidence="6">Single-pass membrane protein</topology>
    </subcellularLocation>
</comment>
<comment type="alternative products">
    <event type="alternative splicing"/>
    <isoform>
        <id>Q8RX80-1</id>
        <name>1</name>
        <sequence type="displayed"/>
    </isoform>
    <text>A number of isoforms are produced. According to EST sequences.</text>
</comment>
<comment type="similarity">
    <text evidence="3">Belongs to the protein kinase superfamily. Ser/Thr protein kinase family. CRK subfamily.</text>
</comment>
<comment type="sequence caution" evidence="6">
    <conflict type="erroneous initiation">
        <sequence resource="EMBL-CDS" id="AAL90912"/>
    </conflict>
</comment>
<comment type="sequence caution" evidence="6">
    <conflict type="erroneous initiation">
        <sequence resource="EMBL-CDS" id="AAN46814"/>
    </conflict>
</comment>
<comment type="sequence caution" evidence="6">
    <conflict type="erroneous gene model prediction">
        <sequence resource="EMBL-CDS" id="CAA18473"/>
    </conflict>
</comment>
<comment type="sequence caution" evidence="6">
    <conflict type="erroneous gene model prediction">
        <sequence resource="EMBL-CDS" id="CAB79281"/>
    </conflict>
</comment>
<accession>Q8RX80</accession>
<accession>F4JNH1</accession>
<accession>O65477</accession>
<feature type="signal peptide" evidence="2">
    <location>
        <begin position="1"/>
        <end position="27"/>
    </location>
</feature>
<feature type="chain" id="PRO_0000295065" description="Cysteine-rich receptor-like protein kinase 18">
    <location>
        <begin position="28"/>
        <end position="659"/>
    </location>
</feature>
<feature type="topological domain" description="Extracellular" evidence="2">
    <location>
        <begin position="28"/>
        <end position="287"/>
    </location>
</feature>
<feature type="transmembrane region" description="Helical" evidence="2">
    <location>
        <begin position="288"/>
        <end position="308"/>
    </location>
</feature>
<feature type="topological domain" description="Cytoplasmic" evidence="2">
    <location>
        <begin position="309"/>
        <end position="659"/>
    </location>
</feature>
<feature type="domain" description="Gnk2-homologous 1" evidence="4">
    <location>
        <begin position="28"/>
        <end position="131"/>
    </location>
</feature>
<feature type="domain" description="Gnk2-homologous 2" evidence="4">
    <location>
        <begin position="137"/>
        <end position="250"/>
    </location>
</feature>
<feature type="domain" description="Protein kinase" evidence="3">
    <location>
        <begin position="339"/>
        <end position="611"/>
    </location>
</feature>
<feature type="active site" description="Proton acceptor" evidence="3 5">
    <location>
        <position position="464"/>
    </location>
</feature>
<feature type="binding site" evidence="3">
    <location>
        <begin position="345"/>
        <end position="353"/>
    </location>
    <ligand>
        <name>ATP</name>
        <dbReference type="ChEBI" id="CHEBI:30616"/>
    </ligand>
</feature>
<feature type="binding site" evidence="3">
    <location>
        <position position="367"/>
    </location>
    <ligand>
        <name>ATP</name>
        <dbReference type="ChEBI" id="CHEBI:30616"/>
    </ligand>
</feature>
<feature type="modified residue" description="Phosphotyrosine" evidence="1">
    <location>
        <position position="412"/>
    </location>
</feature>
<feature type="modified residue" description="Phosphoserine" evidence="1">
    <location>
        <position position="468"/>
    </location>
</feature>
<feature type="modified residue" description="Phosphothreonine" evidence="1">
    <location>
        <position position="504"/>
    </location>
</feature>
<feature type="modified residue" description="Phosphotyrosine" evidence="1">
    <location>
        <position position="512"/>
    </location>
</feature>
<feature type="glycosylation site" description="N-linked (GlcNAc...) asparagine" evidence="2">
    <location>
        <position position="32"/>
    </location>
</feature>
<feature type="glycosylation site" description="N-linked (GlcNAc...) asparagine" evidence="2">
    <location>
        <position position="57"/>
    </location>
</feature>
<feature type="glycosylation site" description="N-linked (GlcNAc...) asparagine" evidence="2">
    <location>
        <position position="152"/>
    </location>
</feature>
<feature type="glycosylation site" description="N-linked (GlcNAc...) asparagine" evidence="2">
    <location>
        <position position="162"/>
    </location>
</feature>
<feature type="glycosylation site" description="N-linked (GlcNAc...) asparagine" evidence="2">
    <location>
        <position position="179"/>
    </location>
</feature>
<feature type="glycosylation site" description="N-linked (GlcNAc...) asparagine" evidence="2">
    <location>
        <position position="180"/>
    </location>
</feature>
<feature type="glycosylation site" description="N-linked (GlcNAc...) asparagine" evidence="2">
    <location>
        <position position="197"/>
    </location>
</feature>
<feature type="glycosylation site" description="N-linked (GlcNAc...) asparagine" evidence="2">
    <location>
        <position position="275"/>
    </location>
</feature>
<feature type="glycosylation site" description="N-linked (GlcNAc...) asparagine" evidence="2">
    <location>
        <position position="279"/>
    </location>
</feature>
<gene>
    <name type="primary">CRK18</name>
    <name type="ordered locus">At4g23260</name>
    <name type="ORF">F21P8.150</name>
</gene>
<evidence type="ECO:0000250" key="1">
    <source>
        <dbReference type="UniProtKB" id="O48814"/>
    </source>
</evidence>
<evidence type="ECO:0000255" key="2"/>
<evidence type="ECO:0000255" key="3">
    <source>
        <dbReference type="PROSITE-ProRule" id="PRU00159"/>
    </source>
</evidence>
<evidence type="ECO:0000255" key="4">
    <source>
        <dbReference type="PROSITE-ProRule" id="PRU00806"/>
    </source>
</evidence>
<evidence type="ECO:0000255" key="5">
    <source>
        <dbReference type="PROSITE-ProRule" id="PRU10027"/>
    </source>
</evidence>
<evidence type="ECO:0000305" key="6"/>
<dbReference type="EC" id="2.7.11.-"/>
<dbReference type="EMBL" id="AL022347">
    <property type="protein sequence ID" value="CAA18473.1"/>
    <property type="status" value="ALT_SEQ"/>
    <property type="molecule type" value="Genomic_DNA"/>
</dbReference>
<dbReference type="EMBL" id="AL161559">
    <property type="protein sequence ID" value="CAB79281.1"/>
    <property type="status" value="ALT_SEQ"/>
    <property type="molecule type" value="Genomic_DNA"/>
</dbReference>
<dbReference type="EMBL" id="CP002687">
    <property type="protein sequence ID" value="AEE84729.2"/>
    <property type="molecule type" value="Genomic_DNA"/>
</dbReference>
<dbReference type="EMBL" id="AY090250">
    <property type="protein sequence ID" value="AAL90912.1"/>
    <property type="status" value="ALT_INIT"/>
    <property type="molecule type" value="mRNA"/>
</dbReference>
<dbReference type="EMBL" id="BT001060">
    <property type="protein sequence ID" value="AAN46814.1"/>
    <property type="status" value="ALT_INIT"/>
    <property type="molecule type" value="mRNA"/>
</dbReference>
<dbReference type="PIR" id="T04843">
    <property type="entry name" value="T04843"/>
</dbReference>
<dbReference type="RefSeq" id="NP_001320043.1">
    <molecule id="Q8RX80-1"/>
    <property type="nucleotide sequence ID" value="NM_001341592.1"/>
</dbReference>
<dbReference type="SMR" id="Q8RX80"/>
<dbReference type="FunCoup" id="Q8RX80">
    <property type="interactions" value="146"/>
</dbReference>
<dbReference type="STRING" id="3702.Q8RX80"/>
<dbReference type="GlyCosmos" id="Q8RX80">
    <property type="glycosylation" value="9 sites, No reported glycans"/>
</dbReference>
<dbReference type="GlyGen" id="Q8RX80">
    <property type="glycosylation" value="9 sites"/>
</dbReference>
<dbReference type="PaxDb" id="3702-AT4G23260.1"/>
<dbReference type="ProteomicsDB" id="224378">
    <molecule id="Q8RX80-1"/>
</dbReference>
<dbReference type="EnsemblPlants" id="AT4G23260.1">
    <molecule id="Q8RX80-1"/>
    <property type="protein sequence ID" value="AT4G23260.1"/>
    <property type="gene ID" value="AT4G23260"/>
</dbReference>
<dbReference type="GeneID" id="828425"/>
<dbReference type="Gramene" id="AT4G23260.1">
    <molecule id="Q8RX80-1"/>
    <property type="protein sequence ID" value="AT4G23260.1"/>
    <property type="gene ID" value="AT4G23260"/>
</dbReference>
<dbReference type="KEGG" id="ath:AT4G23260"/>
<dbReference type="Araport" id="AT4G23260"/>
<dbReference type="TAIR" id="AT4G23260">
    <property type="gene designation" value="CRK18"/>
</dbReference>
<dbReference type="eggNOG" id="ENOG502QWDY">
    <property type="taxonomic scope" value="Eukaryota"/>
</dbReference>
<dbReference type="HOGENOM" id="CLU_000288_35_2_1"/>
<dbReference type="InParanoid" id="Q8RX80"/>
<dbReference type="OMA" id="NASKYYA"/>
<dbReference type="PhylomeDB" id="Q8RX80"/>
<dbReference type="PRO" id="PR:Q8RX80"/>
<dbReference type="Proteomes" id="UP000006548">
    <property type="component" value="Chromosome 4"/>
</dbReference>
<dbReference type="ExpressionAtlas" id="Q8RX80">
    <property type="expression patterns" value="baseline and differential"/>
</dbReference>
<dbReference type="GO" id="GO:0016020">
    <property type="term" value="C:membrane"/>
    <property type="evidence" value="ECO:0007669"/>
    <property type="project" value="UniProtKB-SubCell"/>
</dbReference>
<dbReference type="GO" id="GO:0005524">
    <property type="term" value="F:ATP binding"/>
    <property type="evidence" value="ECO:0007669"/>
    <property type="project" value="UniProtKB-KW"/>
</dbReference>
<dbReference type="GO" id="GO:0106310">
    <property type="term" value="F:protein serine kinase activity"/>
    <property type="evidence" value="ECO:0007669"/>
    <property type="project" value="RHEA"/>
</dbReference>
<dbReference type="GO" id="GO:0004674">
    <property type="term" value="F:protein serine/threonine kinase activity"/>
    <property type="evidence" value="ECO:0007669"/>
    <property type="project" value="UniProtKB-KW"/>
</dbReference>
<dbReference type="CDD" id="cd23509">
    <property type="entry name" value="Gnk2-like"/>
    <property type="match status" value="2"/>
</dbReference>
<dbReference type="CDD" id="cd14066">
    <property type="entry name" value="STKc_IRAK"/>
    <property type="match status" value="1"/>
</dbReference>
<dbReference type="FunFam" id="1.10.510.10:FF:000129">
    <property type="entry name" value="cysteine-rich receptor-like protein kinase 10"/>
    <property type="match status" value="1"/>
</dbReference>
<dbReference type="FunFam" id="3.30.430.20:FF:000007">
    <property type="entry name" value="Cysteine-rich receptor-like protein kinase 11"/>
    <property type="match status" value="1"/>
</dbReference>
<dbReference type="FunFam" id="3.30.200.20:FF:000959">
    <property type="entry name" value="Cysteine-rich receptor-like protein kinase 17"/>
    <property type="match status" value="1"/>
</dbReference>
<dbReference type="FunFam" id="3.30.430.20:FF:000003">
    <property type="entry name" value="Cysteine-rich RLK (RECEPTOR-like protein kinase) 10"/>
    <property type="match status" value="1"/>
</dbReference>
<dbReference type="Gene3D" id="3.30.430.20">
    <property type="entry name" value="Gnk2 domain, C-X8-C-X2-C motif"/>
    <property type="match status" value="2"/>
</dbReference>
<dbReference type="Gene3D" id="3.30.200.20">
    <property type="entry name" value="Phosphorylase Kinase, domain 1"/>
    <property type="match status" value="1"/>
</dbReference>
<dbReference type="Gene3D" id="1.10.510.10">
    <property type="entry name" value="Transferase(Phosphotransferase) domain 1"/>
    <property type="match status" value="1"/>
</dbReference>
<dbReference type="InterPro" id="IPR002902">
    <property type="entry name" value="GNK2"/>
</dbReference>
<dbReference type="InterPro" id="IPR038408">
    <property type="entry name" value="GNK2_sf"/>
</dbReference>
<dbReference type="InterPro" id="IPR011009">
    <property type="entry name" value="Kinase-like_dom_sf"/>
</dbReference>
<dbReference type="InterPro" id="IPR000719">
    <property type="entry name" value="Prot_kinase_dom"/>
</dbReference>
<dbReference type="InterPro" id="IPR017441">
    <property type="entry name" value="Protein_kinase_ATP_BS"/>
</dbReference>
<dbReference type="InterPro" id="IPR001245">
    <property type="entry name" value="Ser-Thr/Tyr_kinase_cat_dom"/>
</dbReference>
<dbReference type="InterPro" id="IPR008271">
    <property type="entry name" value="Ser/Thr_kinase_AS"/>
</dbReference>
<dbReference type="PANTHER" id="PTHR27002:SF989">
    <property type="entry name" value="CYSTEINE-RICH RECEPTOR-LIKE PROTEIN KINASE 18"/>
    <property type="match status" value="1"/>
</dbReference>
<dbReference type="PANTHER" id="PTHR27002">
    <property type="entry name" value="RECEPTOR-LIKE SERINE/THREONINE-PROTEIN KINASE SD1-8"/>
    <property type="match status" value="1"/>
</dbReference>
<dbReference type="Pfam" id="PF07714">
    <property type="entry name" value="PK_Tyr_Ser-Thr"/>
    <property type="match status" value="1"/>
</dbReference>
<dbReference type="Pfam" id="PF01657">
    <property type="entry name" value="Stress-antifung"/>
    <property type="match status" value="2"/>
</dbReference>
<dbReference type="SMART" id="SM00220">
    <property type="entry name" value="S_TKc"/>
    <property type="match status" value="1"/>
</dbReference>
<dbReference type="SUPFAM" id="SSF56112">
    <property type="entry name" value="Protein kinase-like (PK-like)"/>
    <property type="match status" value="1"/>
</dbReference>
<dbReference type="PROSITE" id="PS51473">
    <property type="entry name" value="GNK2"/>
    <property type="match status" value="2"/>
</dbReference>
<dbReference type="PROSITE" id="PS00107">
    <property type="entry name" value="PROTEIN_KINASE_ATP"/>
    <property type="match status" value="1"/>
</dbReference>
<dbReference type="PROSITE" id="PS50011">
    <property type="entry name" value="PROTEIN_KINASE_DOM"/>
    <property type="match status" value="1"/>
</dbReference>
<dbReference type="PROSITE" id="PS00108">
    <property type="entry name" value="PROTEIN_KINASE_ST"/>
    <property type="match status" value="1"/>
</dbReference>
<reference key="1">
    <citation type="journal article" date="1999" name="Nature">
        <title>Sequence and analysis of chromosome 4 of the plant Arabidopsis thaliana.</title>
        <authorList>
            <person name="Mayer K.F.X."/>
            <person name="Schueller C."/>
            <person name="Wambutt R."/>
            <person name="Murphy G."/>
            <person name="Volckaert G."/>
            <person name="Pohl T."/>
            <person name="Duesterhoeft A."/>
            <person name="Stiekema W."/>
            <person name="Entian K.-D."/>
            <person name="Terryn N."/>
            <person name="Harris B."/>
            <person name="Ansorge W."/>
            <person name="Brandt P."/>
            <person name="Grivell L.A."/>
            <person name="Rieger M."/>
            <person name="Weichselgartner M."/>
            <person name="de Simone V."/>
            <person name="Obermaier B."/>
            <person name="Mache R."/>
            <person name="Mueller M."/>
            <person name="Kreis M."/>
            <person name="Delseny M."/>
            <person name="Puigdomenech P."/>
            <person name="Watson M."/>
            <person name="Schmidtheini T."/>
            <person name="Reichert B."/>
            <person name="Portetelle D."/>
            <person name="Perez-Alonso M."/>
            <person name="Boutry M."/>
            <person name="Bancroft I."/>
            <person name="Vos P."/>
            <person name="Hoheisel J."/>
            <person name="Zimmermann W."/>
            <person name="Wedler H."/>
            <person name="Ridley P."/>
            <person name="Langham S.-A."/>
            <person name="McCullagh B."/>
            <person name="Bilham L."/>
            <person name="Robben J."/>
            <person name="van der Schueren J."/>
            <person name="Grymonprez B."/>
            <person name="Chuang Y.-J."/>
            <person name="Vandenbussche F."/>
            <person name="Braeken M."/>
            <person name="Weltjens I."/>
            <person name="Voet M."/>
            <person name="Bastiaens I."/>
            <person name="Aert R."/>
            <person name="Defoor E."/>
            <person name="Weitzenegger T."/>
            <person name="Bothe G."/>
            <person name="Ramsperger U."/>
            <person name="Hilbert H."/>
            <person name="Braun M."/>
            <person name="Holzer E."/>
            <person name="Brandt A."/>
            <person name="Peters S."/>
            <person name="van Staveren M."/>
            <person name="Dirkse W."/>
            <person name="Mooijman P."/>
            <person name="Klein Lankhorst R."/>
            <person name="Rose M."/>
            <person name="Hauf J."/>
            <person name="Koetter P."/>
            <person name="Berneiser S."/>
            <person name="Hempel S."/>
            <person name="Feldpausch M."/>
            <person name="Lamberth S."/>
            <person name="Van den Daele H."/>
            <person name="De Keyser A."/>
            <person name="Buysshaert C."/>
            <person name="Gielen J."/>
            <person name="Villarroel R."/>
            <person name="De Clercq R."/>
            <person name="van Montagu M."/>
            <person name="Rogers J."/>
            <person name="Cronin A."/>
            <person name="Quail M.A."/>
            <person name="Bray-Allen S."/>
            <person name="Clark L."/>
            <person name="Doggett J."/>
            <person name="Hall S."/>
            <person name="Kay M."/>
            <person name="Lennard N."/>
            <person name="McLay K."/>
            <person name="Mayes R."/>
            <person name="Pettett A."/>
            <person name="Rajandream M.A."/>
            <person name="Lyne M."/>
            <person name="Benes V."/>
            <person name="Rechmann S."/>
            <person name="Borkova D."/>
            <person name="Bloecker H."/>
            <person name="Scharfe M."/>
            <person name="Grimm M."/>
            <person name="Loehnert T.-H."/>
            <person name="Dose S."/>
            <person name="de Haan M."/>
            <person name="Maarse A.C."/>
            <person name="Schaefer M."/>
            <person name="Mueller-Auer S."/>
            <person name="Gabel C."/>
            <person name="Fuchs M."/>
            <person name="Fartmann B."/>
            <person name="Granderath K."/>
            <person name="Dauner D."/>
            <person name="Herzl A."/>
            <person name="Neumann S."/>
            <person name="Argiriou A."/>
            <person name="Vitale D."/>
            <person name="Liguori R."/>
            <person name="Piravandi E."/>
            <person name="Massenet O."/>
            <person name="Quigley F."/>
            <person name="Clabauld G."/>
            <person name="Muendlein A."/>
            <person name="Felber R."/>
            <person name="Schnabl S."/>
            <person name="Hiller R."/>
            <person name="Schmidt W."/>
            <person name="Lecharny A."/>
            <person name="Aubourg S."/>
            <person name="Chefdor F."/>
            <person name="Cooke R."/>
            <person name="Berger C."/>
            <person name="Monfort A."/>
            <person name="Casacuberta E."/>
            <person name="Gibbons T."/>
            <person name="Weber N."/>
            <person name="Vandenbol M."/>
            <person name="Bargues M."/>
            <person name="Terol J."/>
            <person name="Torres A."/>
            <person name="Perez-Perez A."/>
            <person name="Purnelle B."/>
            <person name="Bent E."/>
            <person name="Johnson S."/>
            <person name="Tacon D."/>
            <person name="Jesse T."/>
            <person name="Heijnen L."/>
            <person name="Schwarz S."/>
            <person name="Scholler P."/>
            <person name="Heber S."/>
            <person name="Francs P."/>
            <person name="Bielke C."/>
            <person name="Frishman D."/>
            <person name="Haase D."/>
            <person name="Lemcke K."/>
            <person name="Mewes H.-W."/>
            <person name="Stocker S."/>
            <person name="Zaccaria P."/>
            <person name="Bevan M."/>
            <person name="Wilson R.K."/>
            <person name="de la Bastide M."/>
            <person name="Habermann K."/>
            <person name="Parnell L."/>
            <person name="Dedhia N."/>
            <person name="Gnoj L."/>
            <person name="Schutz K."/>
            <person name="Huang E."/>
            <person name="Spiegel L."/>
            <person name="Sekhon M."/>
            <person name="Murray J."/>
            <person name="Sheet P."/>
            <person name="Cordes M."/>
            <person name="Abu-Threideh J."/>
            <person name="Stoneking T."/>
            <person name="Kalicki J."/>
            <person name="Graves T."/>
            <person name="Harmon G."/>
            <person name="Edwards J."/>
            <person name="Latreille P."/>
            <person name="Courtney L."/>
            <person name="Cloud J."/>
            <person name="Abbott A."/>
            <person name="Scott K."/>
            <person name="Johnson D."/>
            <person name="Minx P."/>
            <person name="Bentley D."/>
            <person name="Fulton B."/>
            <person name="Miller N."/>
            <person name="Greco T."/>
            <person name="Kemp K."/>
            <person name="Kramer J."/>
            <person name="Fulton L."/>
            <person name="Mardis E."/>
            <person name="Dante M."/>
            <person name="Pepin K."/>
            <person name="Hillier L.W."/>
            <person name="Nelson J."/>
            <person name="Spieth J."/>
            <person name="Ryan E."/>
            <person name="Andrews S."/>
            <person name="Geisel C."/>
            <person name="Layman D."/>
            <person name="Du H."/>
            <person name="Ali J."/>
            <person name="Berghoff A."/>
            <person name="Jones K."/>
            <person name="Drone K."/>
            <person name="Cotton M."/>
            <person name="Joshu C."/>
            <person name="Antonoiu B."/>
            <person name="Zidanic M."/>
            <person name="Strong C."/>
            <person name="Sun H."/>
            <person name="Lamar B."/>
            <person name="Yordan C."/>
            <person name="Ma P."/>
            <person name="Zhong J."/>
            <person name="Preston R."/>
            <person name="Vil D."/>
            <person name="Shekher M."/>
            <person name="Matero A."/>
            <person name="Shah R."/>
            <person name="Swaby I.K."/>
            <person name="O'Shaughnessy A."/>
            <person name="Rodriguez M."/>
            <person name="Hoffman J."/>
            <person name="Till S."/>
            <person name="Granat S."/>
            <person name="Shohdy N."/>
            <person name="Hasegawa A."/>
            <person name="Hameed A."/>
            <person name="Lodhi M."/>
            <person name="Johnson A."/>
            <person name="Chen E."/>
            <person name="Marra M.A."/>
            <person name="Martienssen R."/>
            <person name="McCombie W.R."/>
        </authorList>
    </citation>
    <scope>NUCLEOTIDE SEQUENCE [LARGE SCALE GENOMIC DNA]</scope>
    <source>
        <strain>cv. Columbia</strain>
    </source>
</reference>
<reference key="2">
    <citation type="journal article" date="2017" name="Plant J.">
        <title>Araport11: a complete reannotation of the Arabidopsis thaliana reference genome.</title>
        <authorList>
            <person name="Cheng C.Y."/>
            <person name="Krishnakumar V."/>
            <person name="Chan A.P."/>
            <person name="Thibaud-Nissen F."/>
            <person name="Schobel S."/>
            <person name="Town C.D."/>
        </authorList>
    </citation>
    <scope>GENOME REANNOTATION</scope>
    <source>
        <strain>cv. Columbia</strain>
    </source>
</reference>
<reference key="3">
    <citation type="journal article" date="2003" name="Science">
        <title>Empirical analysis of transcriptional activity in the Arabidopsis genome.</title>
        <authorList>
            <person name="Yamada K."/>
            <person name="Lim J."/>
            <person name="Dale J.M."/>
            <person name="Chen H."/>
            <person name="Shinn P."/>
            <person name="Palm C.J."/>
            <person name="Southwick A.M."/>
            <person name="Wu H.C."/>
            <person name="Kim C.J."/>
            <person name="Nguyen M."/>
            <person name="Pham P.K."/>
            <person name="Cheuk R.F."/>
            <person name="Karlin-Newmann G."/>
            <person name="Liu S.X."/>
            <person name="Lam B."/>
            <person name="Sakano H."/>
            <person name="Wu T."/>
            <person name="Yu G."/>
            <person name="Miranda M."/>
            <person name="Quach H.L."/>
            <person name="Tripp M."/>
            <person name="Chang C.H."/>
            <person name="Lee J.M."/>
            <person name="Toriumi M.J."/>
            <person name="Chan M.M."/>
            <person name="Tang C.C."/>
            <person name="Onodera C.S."/>
            <person name="Deng J.M."/>
            <person name="Akiyama K."/>
            <person name="Ansari Y."/>
            <person name="Arakawa T."/>
            <person name="Banh J."/>
            <person name="Banno F."/>
            <person name="Bowser L."/>
            <person name="Brooks S.Y."/>
            <person name="Carninci P."/>
            <person name="Chao Q."/>
            <person name="Choy N."/>
            <person name="Enju A."/>
            <person name="Goldsmith A.D."/>
            <person name="Gurjal M."/>
            <person name="Hansen N.F."/>
            <person name="Hayashizaki Y."/>
            <person name="Johnson-Hopson C."/>
            <person name="Hsuan V.W."/>
            <person name="Iida K."/>
            <person name="Karnes M."/>
            <person name="Khan S."/>
            <person name="Koesema E."/>
            <person name="Ishida J."/>
            <person name="Jiang P.X."/>
            <person name="Jones T."/>
            <person name="Kawai J."/>
            <person name="Kamiya A."/>
            <person name="Meyers C."/>
            <person name="Nakajima M."/>
            <person name="Narusaka M."/>
            <person name="Seki M."/>
            <person name="Sakurai T."/>
            <person name="Satou M."/>
            <person name="Tamse R."/>
            <person name="Vaysberg M."/>
            <person name="Wallender E.K."/>
            <person name="Wong C."/>
            <person name="Yamamura Y."/>
            <person name="Yuan S."/>
            <person name="Shinozaki K."/>
            <person name="Davis R.W."/>
            <person name="Theologis A."/>
            <person name="Ecker J.R."/>
        </authorList>
    </citation>
    <scope>NUCLEOTIDE SEQUENCE [LARGE SCALE MRNA] OF 55-659</scope>
    <source>
        <strain>cv. Columbia</strain>
    </source>
</reference>
<reference key="4">
    <citation type="journal article" date="2001" name="Plant Physiol.">
        <title>A superfamily of proteins with novel cysteine-rich repeats.</title>
        <authorList>
            <person name="Chen Z."/>
        </authorList>
    </citation>
    <scope>GENE FAMILY ORGANIZATION</scope>
    <scope>NOMENCLATURE</scope>
</reference>
<proteinExistence type="evidence at transcript level"/>
<organism>
    <name type="scientific">Arabidopsis thaliana</name>
    <name type="common">Mouse-ear cress</name>
    <dbReference type="NCBI Taxonomy" id="3702"/>
    <lineage>
        <taxon>Eukaryota</taxon>
        <taxon>Viridiplantae</taxon>
        <taxon>Streptophyta</taxon>
        <taxon>Embryophyta</taxon>
        <taxon>Tracheophyta</taxon>
        <taxon>Spermatophyta</taxon>
        <taxon>Magnoliopsida</taxon>
        <taxon>eudicotyledons</taxon>
        <taxon>Gunneridae</taxon>
        <taxon>Pentapetalae</taxon>
        <taxon>rosids</taxon>
        <taxon>malvids</taxon>
        <taxon>Brassicales</taxon>
        <taxon>Brassicaceae</taxon>
        <taxon>Camelineae</taxon>
        <taxon>Arabidopsis</taxon>
    </lineage>
</organism>
<sequence>MATKSCELVLCFFVFFVISFSAISVSAQTCDNTTGTFIPNSPYDKNRRLILSTLASNVTAQEGYFIGSIGIAPDQVFATGMCAPGSERDVCSLCIRSTSESLLQSCLDQADAFFWSGEETLCLVRYANRPFSGLLVMDPLGAIFNTGELNTNQTVFDIEWNNLTSSMIAGITSSSSGGNNSSKYYSDDIALVPDFKNISALMQCTPDVSSEDCNTCLRQNVVDYDNCCRGHQGGVMSRPNCFFRWEVYPFSGAIDQINLPKSPPPSVTSPSPIANITKNDSRISGGKIAAIVVVTVVTIILVVLGFVISNRRKQKQEMDLPTESVQFDLKTIESATSNFSERNKLGKGGFGEVYKGMLMNGTEIAVKRLSKTSGQGEVEFKNEVVVVAKLQHINLVRLLGFSLQGEEKLLVYEFVSNKSLDYFLFDPTKRNQLDWTMRRNIIGGITRGILYLHQDSRLKIIHRDLKASNILLDADMNPKIADFGMARIFGVDQTVANTGRVVGTFGYMSPEYVTHGQFSMKSDVYSFGVLILEIISGKKNSSFYQMDGLVNNLVTYVWKLWENKSLHELLDPFINQDFTSEEVIRYIHIGLLCVQENPADRPTMSTIHQMLTNSSITLPVPLPPGFFFRNGPGSNPGQSNSKSFACSVDEATITDVNPR</sequence>
<protein>
    <recommendedName>
        <fullName>Cysteine-rich receptor-like protein kinase 18</fullName>
        <shortName>Cysteine-rich RLK18</shortName>
        <ecNumber>2.7.11.-</ecNumber>
    </recommendedName>
</protein>